<accession>P55510</accession>
<comment type="function">
    <text evidence="2">Involved in plasmid stability.</text>
</comment>
<comment type="similarity">
    <text evidence="2">To P.syringae pv tomato plasmid stability protein StbC.</text>
</comment>
<name>Y4JJ_SINFN</name>
<evidence type="ECO:0000256" key="1">
    <source>
        <dbReference type="SAM" id="MobiDB-lite"/>
    </source>
</evidence>
<evidence type="ECO:0000305" key="2"/>
<organism>
    <name type="scientific">Sinorhizobium fredii (strain NBRC 101917 / NGR234)</name>
    <dbReference type="NCBI Taxonomy" id="394"/>
    <lineage>
        <taxon>Bacteria</taxon>
        <taxon>Pseudomonadati</taxon>
        <taxon>Pseudomonadota</taxon>
        <taxon>Alphaproteobacteria</taxon>
        <taxon>Hyphomicrobiales</taxon>
        <taxon>Rhizobiaceae</taxon>
        <taxon>Sinorhizobium/Ensifer group</taxon>
        <taxon>Sinorhizobium</taxon>
    </lineage>
</organism>
<protein>
    <recommendedName>
        <fullName>Putative plasmid stability protein y4jJ</fullName>
    </recommendedName>
</protein>
<geneLocation type="plasmid">
    <name>sym pNGR234a</name>
</geneLocation>
<sequence>MANVTVRNLPDEVHRALRVRAAMHGRSTEAEIRDILETTVRPPERVKLGSLLASIAHEAGGLTDAEAEHFNQLRDKTPAEPMSFE</sequence>
<reference key="1">
    <citation type="journal article" date="1997" name="Nature">
        <title>Molecular basis of symbiosis between Rhizobium and legumes.</title>
        <authorList>
            <person name="Freiberg C.A."/>
            <person name="Fellay R."/>
            <person name="Bairoch A."/>
            <person name="Broughton W.J."/>
            <person name="Rosenthal A."/>
            <person name="Perret X."/>
        </authorList>
    </citation>
    <scope>NUCLEOTIDE SEQUENCE [LARGE SCALE GENOMIC DNA]</scope>
    <source>
        <strain>NBRC 101917 / NGR234</strain>
    </source>
</reference>
<reference key="2">
    <citation type="journal article" date="2009" name="Appl. Environ. Microbiol.">
        <title>Rhizobium sp. strain NGR234 possesses a remarkable number of secretion systems.</title>
        <authorList>
            <person name="Schmeisser C."/>
            <person name="Liesegang H."/>
            <person name="Krysciak D."/>
            <person name="Bakkou N."/>
            <person name="Le Quere A."/>
            <person name="Wollherr A."/>
            <person name="Heinemeyer I."/>
            <person name="Morgenstern B."/>
            <person name="Pommerening-Roeser A."/>
            <person name="Flores M."/>
            <person name="Palacios R."/>
            <person name="Brenner S."/>
            <person name="Gottschalk G."/>
            <person name="Schmitz R.A."/>
            <person name="Broughton W.J."/>
            <person name="Perret X."/>
            <person name="Strittmatter A.W."/>
            <person name="Streit W.R."/>
        </authorList>
    </citation>
    <scope>NUCLEOTIDE SEQUENCE [LARGE SCALE GENOMIC DNA]</scope>
    <source>
        <strain>NBRC 101917 / NGR234</strain>
    </source>
</reference>
<proteinExistence type="predicted"/>
<gene>
    <name type="ordered locus">NGR_a03050</name>
    <name type="ORF">y4jJ</name>
</gene>
<feature type="chain" id="PRO_0000200876" description="Putative plasmid stability protein y4jJ">
    <location>
        <begin position="1"/>
        <end position="85"/>
    </location>
</feature>
<feature type="region of interest" description="Disordered" evidence="1">
    <location>
        <begin position="66"/>
        <end position="85"/>
    </location>
</feature>
<feature type="compositionally biased region" description="Basic and acidic residues" evidence="1">
    <location>
        <begin position="66"/>
        <end position="78"/>
    </location>
</feature>
<keyword id="KW-0614">Plasmid</keyword>
<keyword id="KW-1185">Reference proteome</keyword>
<dbReference type="EMBL" id="U00090">
    <property type="protein sequence ID" value="AAB91722.1"/>
    <property type="molecule type" value="Genomic_DNA"/>
</dbReference>
<dbReference type="PIR" id="T28637">
    <property type="entry name" value="T28637"/>
</dbReference>
<dbReference type="RefSeq" id="NP_443920.1">
    <property type="nucleotide sequence ID" value="NC_000914.2"/>
</dbReference>
<dbReference type="RefSeq" id="WP_010875326.1">
    <property type="nucleotide sequence ID" value="NC_000914.2"/>
</dbReference>
<dbReference type="SMR" id="P55510"/>
<dbReference type="KEGG" id="rhi:NGR_a03050"/>
<dbReference type="PATRIC" id="fig|394.7.peg.317"/>
<dbReference type="eggNOG" id="COG4691">
    <property type="taxonomic scope" value="Bacteria"/>
</dbReference>
<dbReference type="HOGENOM" id="CLU_168829_4_0_5"/>
<dbReference type="OrthoDB" id="2389872at2"/>
<dbReference type="Proteomes" id="UP000001054">
    <property type="component" value="Plasmid pNGR234a"/>
</dbReference>
<dbReference type="GO" id="GO:0006355">
    <property type="term" value="P:regulation of DNA-templated transcription"/>
    <property type="evidence" value="ECO:0007669"/>
    <property type="project" value="InterPro"/>
</dbReference>
<dbReference type="Gene3D" id="1.10.1220.10">
    <property type="entry name" value="Met repressor-like"/>
    <property type="match status" value="1"/>
</dbReference>
<dbReference type="InterPro" id="IPR013321">
    <property type="entry name" value="Arc_rbn_hlx_hlx"/>
</dbReference>
<dbReference type="InterPro" id="IPR053853">
    <property type="entry name" value="FitA-like_RHH"/>
</dbReference>
<dbReference type="InterPro" id="IPR010985">
    <property type="entry name" value="Ribbon_hlx_hlx"/>
</dbReference>
<dbReference type="Pfam" id="PF22513">
    <property type="entry name" value="FitA-like_RHH"/>
    <property type="match status" value="1"/>
</dbReference>
<dbReference type="SUPFAM" id="SSF47598">
    <property type="entry name" value="Ribbon-helix-helix"/>
    <property type="match status" value="1"/>
</dbReference>